<reference key="1">
    <citation type="journal article" date="2003" name="Lancet">
        <title>Genome sequence of Vibrio parahaemolyticus: a pathogenic mechanism distinct from that of V. cholerae.</title>
        <authorList>
            <person name="Makino K."/>
            <person name="Oshima K."/>
            <person name="Kurokawa K."/>
            <person name="Yokoyama K."/>
            <person name="Uda T."/>
            <person name="Tagomori K."/>
            <person name="Iijima Y."/>
            <person name="Najima M."/>
            <person name="Nakano M."/>
            <person name="Yamashita A."/>
            <person name="Kubota Y."/>
            <person name="Kimura S."/>
            <person name="Yasunaga T."/>
            <person name="Honda T."/>
            <person name="Shinagawa H."/>
            <person name="Hattori M."/>
            <person name="Iida T."/>
        </authorList>
    </citation>
    <scope>NUCLEOTIDE SEQUENCE [LARGE SCALE GENOMIC DNA]</scope>
    <source>
        <strain>RIMD 2210633</strain>
    </source>
</reference>
<organism>
    <name type="scientific">Vibrio parahaemolyticus serotype O3:K6 (strain RIMD 2210633)</name>
    <dbReference type="NCBI Taxonomy" id="223926"/>
    <lineage>
        <taxon>Bacteria</taxon>
        <taxon>Pseudomonadati</taxon>
        <taxon>Pseudomonadota</taxon>
        <taxon>Gammaproteobacteria</taxon>
        <taxon>Vibrionales</taxon>
        <taxon>Vibrionaceae</taxon>
        <taxon>Vibrio</taxon>
    </lineage>
</organism>
<keyword id="KW-0067">ATP-binding</keyword>
<keyword id="KW-0963">Cytoplasm</keyword>
<keyword id="KW-0237">DNA synthesis</keyword>
<keyword id="KW-0418">Kinase</keyword>
<keyword id="KW-0479">Metal-binding</keyword>
<keyword id="KW-0547">Nucleotide-binding</keyword>
<keyword id="KW-0808">Transferase</keyword>
<keyword id="KW-0862">Zinc</keyword>
<accession>Q87QJ8</accession>
<dbReference type="EC" id="2.7.1.21" evidence="1"/>
<dbReference type="EMBL" id="BA000031">
    <property type="protein sequence ID" value="BAC59414.1"/>
    <property type="molecule type" value="Genomic_DNA"/>
</dbReference>
<dbReference type="RefSeq" id="NP_797530.1">
    <property type="nucleotide sequence ID" value="NC_004603.1"/>
</dbReference>
<dbReference type="RefSeq" id="WP_005450744.1">
    <property type="nucleotide sequence ID" value="NC_004603.1"/>
</dbReference>
<dbReference type="SMR" id="Q87QJ8"/>
<dbReference type="KEGG" id="vpa:VP1151"/>
<dbReference type="PATRIC" id="fig|223926.6.peg.1092"/>
<dbReference type="eggNOG" id="COG1435">
    <property type="taxonomic scope" value="Bacteria"/>
</dbReference>
<dbReference type="HOGENOM" id="CLU_064400_2_1_6"/>
<dbReference type="Proteomes" id="UP000002493">
    <property type="component" value="Chromosome 1"/>
</dbReference>
<dbReference type="GO" id="GO:0005829">
    <property type="term" value="C:cytosol"/>
    <property type="evidence" value="ECO:0007669"/>
    <property type="project" value="TreeGrafter"/>
</dbReference>
<dbReference type="GO" id="GO:0005524">
    <property type="term" value="F:ATP binding"/>
    <property type="evidence" value="ECO:0007669"/>
    <property type="project" value="UniProtKB-UniRule"/>
</dbReference>
<dbReference type="GO" id="GO:0004797">
    <property type="term" value="F:thymidine kinase activity"/>
    <property type="evidence" value="ECO:0007669"/>
    <property type="project" value="UniProtKB-UniRule"/>
</dbReference>
<dbReference type="GO" id="GO:0008270">
    <property type="term" value="F:zinc ion binding"/>
    <property type="evidence" value="ECO:0007669"/>
    <property type="project" value="UniProtKB-UniRule"/>
</dbReference>
<dbReference type="GO" id="GO:0071897">
    <property type="term" value="P:DNA biosynthetic process"/>
    <property type="evidence" value="ECO:0007669"/>
    <property type="project" value="UniProtKB-KW"/>
</dbReference>
<dbReference type="GO" id="GO:0046104">
    <property type="term" value="P:thymidine metabolic process"/>
    <property type="evidence" value="ECO:0007669"/>
    <property type="project" value="TreeGrafter"/>
</dbReference>
<dbReference type="FunFam" id="3.30.60.20:FF:000017">
    <property type="entry name" value="Thymidine kinase"/>
    <property type="match status" value="1"/>
</dbReference>
<dbReference type="FunFam" id="3.40.50.300:FF:000323">
    <property type="entry name" value="Thymidine kinase"/>
    <property type="match status" value="1"/>
</dbReference>
<dbReference type="Gene3D" id="3.30.60.20">
    <property type="match status" value="1"/>
</dbReference>
<dbReference type="Gene3D" id="3.40.50.300">
    <property type="entry name" value="P-loop containing nucleotide triphosphate hydrolases"/>
    <property type="match status" value="1"/>
</dbReference>
<dbReference type="HAMAP" id="MF_00124">
    <property type="entry name" value="Thymidine_kinase"/>
    <property type="match status" value="1"/>
</dbReference>
<dbReference type="InterPro" id="IPR027417">
    <property type="entry name" value="P-loop_NTPase"/>
</dbReference>
<dbReference type="InterPro" id="IPR001267">
    <property type="entry name" value="Thymidine_kinase"/>
</dbReference>
<dbReference type="InterPro" id="IPR020633">
    <property type="entry name" value="Thymidine_kinase_CS"/>
</dbReference>
<dbReference type="NCBIfam" id="NF003300">
    <property type="entry name" value="PRK04296.1-5"/>
    <property type="match status" value="1"/>
</dbReference>
<dbReference type="PANTHER" id="PTHR11441">
    <property type="entry name" value="THYMIDINE KINASE"/>
    <property type="match status" value="1"/>
</dbReference>
<dbReference type="PANTHER" id="PTHR11441:SF0">
    <property type="entry name" value="THYMIDINE KINASE, CYTOSOLIC"/>
    <property type="match status" value="1"/>
</dbReference>
<dbReference type="Pfam" id="PF00265">
    <property type="entry name" value="TK"/>
    <property type="match status" value="1"/>
</dbReference>
<dbReference type="PIRSF" id="PIRSF035805">
    <property type="entry name" value="TK_cell"/>
    <property type="match status" value="1"/>
</dbReference>
<dbReference type="SUPFAM" id="SSF57716">
    <property type="entry name" value="Glucocorticoid receptor-like (DNA-binding domain)"/>
    <property type="match status" value="1"/>
</dbReference>
<dbReference type="SUPFAM" id="SSF52540">
    <property type="entry name" value="P-loop containing nucleoside triphosphate hydrolases"/>
    <property type="match status" value="1"/>
</dbReference>
<dbReference type="PROSITE" id="PS00603">
    <property type="entry name" value="TK_CELLULAR_TYPE"/>
    <property type="match status" value="1"/>
</dbReference>
<feature type="chain" id="PRO_0000175045" description="Thymidine kinase">
    <location>
        <begin position="1"/>
        <end position="192"/>
    </location>
</feature>
<feature type="active site" description="Proton acceptor" evidence="1">
    <location>
        <position position="88"/>
    </location>
</feature>
<feature type="binding site" evidence="1">
    <location>
        <begin position="9"/>
        <end position="16"/>
    </location>
    <ligand>
        <name>ATP</name>
        <dbReference type="ChEBI" id="CHEBI:30616"/>
    </ligand>
</feature>
<feature type="binding site" evidence="1">
    <location>
        <begin position="87"/>
        <end position="90"/>
    </location>
    <ligand>
        <name>ATP</name>
        <dbReference type="ChEBI" id="CHEBI:30616"/>
    </ligand>
</feature>
<feature type="binding site" evidence="1">
    <location>
        <position position="145"/>
    </location>
    <ligand>
        <name>Zn(2+)</name>
        <dbReference type="ChEBI" id="CHEBI:29105"/>
    </ligand>
</feature>
<feature type="binding site" evidence="1">
    <location>
        <position position="147"/>
    </location>
    <ligand>
        <name>Zn(2+)</name>
        <dbReference type="ChEBI" id="CHEBI:29105"/>
    </ligand>
</feature>
<feature type="binding site" evidence="1">
    <location>
        <position position="182"/>
    </location>
    <ligand>
        <name>Zn(2+)</name>
        <dbReference type="ChEBI" id="CHEBI:29105"/>
    </ligand>
</feature>
<feature type="binding site" evidence="1">
    <location>
        <position position="185"/>
    </location>
    <ligand>
        <name>Zn(2+)</name>
        <dbReference type="ChEBI" id="CHEBI:29105"/>
    </ligand>
</feature>
<sequence>MAQMYFYYSAMNAGKSTTLLQSSFNYQERGMTPVIFTAALDDRYGVGKVSSRIGLQSDAHLFRPDTNLYQEIAALHEVEKRHCILIDECQFLSKEQVYQLTEVVDKLHIPVLCYGLRTDFLGELFEGSKYLLSWADKLVELKTICHCGRKANMVIRTDEHGVAIKEGDQVAIGGNDRYVSVCRQHYKEALGK</sequence>
<protein>
    <recommendedName>
        <fullName evidence="1">Thymidine kinase</fullName>
        <ecNumber evidence="1">2.7.1.21</ecNumber>
    </recommendedName>
</protein>
<evidence type="ECO:0000255" key="1">
    <source>
        <dbReference type="HAMAP-Rule" id="MF_00124"/>
    </source>
</evidence>
<comment type="catalytic activity">
    <reaction evidence="1">
        <text>thymidine + ATP = dTMP + ADP + H(+)</text>
        <dbReference type="Rhea" id="RHEA:19129"/>
        <dbReference type="ChEBI" id="CHEBI:15378"/>
        <dbReference type="ChEBI" id="CHEBI:17748"/>
        <dbReference type="ChEBI" id="CHEBI:30616"/>
        <dbReference type="ChEBI" id="CHEBI:63528"/>
        <dbReference type="ChEBI" id="CHEBI:456216"/>
        <dbReference type="EC" id="2.7.1.21"/>
    </reaction>
</comment>
<comment type="subunit">
    <text evidence="1">Homotetramer.</text>
</comment>
<comment type="subcellular location">
    <subcellularLocation>
        <location evidence="1">Cytoplasm</location>
    </subcellularLocation>
</comment>
<comment type="similarity">
    <text evidence="1">Belongs to the thymidine kinase family.</text>
</comment>
<name>KITH_VIBPA</name>
<proteinExistence type="inferred from homology"/>
<gene>
    <name evidence="1" type="primary">tdk</name>
    <name type="ordered locus">VP1151</name>
</gene>